<accession>P44429</accession>
<keyword id="KW-0324">Glycolysis</keyword>
<keyword id="KW-0456">Lyase</keyword>
<keyword id="KW-0479">Metal-binding</keyword>
<keyword id="KW-1185">Reference proteome</keyword>
<keyword id="KW-0862">Zinc</keyword>
<organism>
    <name type="scientific">Haemophilus influenzae (strain ATCC 51907 / DSM 11121 / KW20 / Rd)</name>
    <dbReference type="NCBI Taxonomy" id="71421"/>
    <lineage>
        <taxon>Bacteria</taxon>
        <taxon>Pseudomonadati</taxon>
        <taxon>Pseudomonadota</taxon>
        <taxon>Gammaproteobacteria</taxon>
        <taxon>Pasteurellales</taxon>
        <taxon>Pasteurellaceae</taxon>
        <taxon>Haemophilus</taxon>
    </lineage>
</organism>
<proteinExistence type="inferred from homology"/>
<sequence length="359" mass="39340">MAKLLDIVKPGVVTGEDVQKVFAYAKEHNFAIPAVNCVGSDSVNAVLETAARVKAPVIIQFSNGGAAFYAGKGIKPTSGTRPDVLGAIAGAKQVHTLAKEYGVPVILHTDHAAKKLLPWIDGLLDAGEKHFAETGRPLFSSHMIDLSEESMEENMAICREYLARMDKMGMTLEIEIGITGGEEDGVDNSDVDESRLYTQPSDVLYVYDQLHPVSPNFTVAAAFGNVHGVYKPGNVKLKPSILGESQEFVSKERNLPAKPINFVFHGGSGSSREEIREAIGYGAIKMNIDTDTQWASWNGILNFYKANEAYLQGQLGNPEGPDAPNKKYYDPRVWLRKMEESMSKRLEQSFEDLNCVDVL</sequence>
<evidence type="ECO:0000250" key="1"/>
<evidence type="ECO:0000305" key="2"/>
<gene>
    <name type="primary">fba</name>
    <name type="ordered locus">HI_0524</name>
</gene>
<reference key="1">
    <citation type="journal article" date="1995" name="Science">
        <title>Whole-genome random sequencing and assembly of Haemophilus influenzae Rd.</title>
        <authorList>
            <person name="Fleischmann R.D."/>
            <person name="Adams M.D."/>
            <person name="White O."/>
            <person name="Clayton R.A."/>
            <person name="Kirkness E.F."/>
            <person name="Kerlavage A.R."/>
            <person name="Bult C.J."/>
            <person name="Tomb J.-F."/>
            <person name="Dougherty B.A."/>
            <person name="Merrick J.M."/>
            <person name="McKenney K."/>
            <person name="Sutton G.G."/>
            <person name="FitzHugh W."/>
            <person name="Fields C.A."/>
            <person name="Gocayne J.D."/>
            <person name="Scott J.D."/>
            <person name="Shirley R."/>
            <person name="Liu L.-I."/>
            <person name="Glodek A."/>
            <person name="Kelley J.M."/>
            <person name="Weidman J.F."/>
            <person name="Phillips C.A."/>
            <person name="Spriggs T."/>
            <person name="Hedblom E."/>
            <person name="Cotton M.D."/>
            <person name="Utterback T.R."/>
            <person name="Hanna M.C."/>
            <person name="Nguyen D.T."/>
            <person name="Saudek D.M."/>
            <person name="Brandon R.C."/>
            <person name="Fine L.D."/>
            <person name="Fritchman J.L."/>
            <person name="Fuhrmann J.L."/>
            <person name="Geoghagen N.S.M."/>
            <person name="Gnehm C.L."/>
            <person name="McDonald L.A."/>
            <person name="Small K.V."/>
            <person name="Fraser C.M."/>
            <person name="Smith H.O."/>
            <person name="Venter J.C."/>
        </authorList>
    </citation>
    <scope>NUCLEOTIDE SEQUENCE [LARGE SCALE GENOMIC DNA]</scope>
    <source>
        <strain>ATCC 51907 / DSM 11121 / KW20 / Rd</strain>
    </source>
</reference>
<name>ALF_HAEIN</name>
<dbReference type="EC" id="4.1.2.13"/>
<dbReference type="EMBL" id="L42023">
    <property type="protein sequence ID" value="AAC22182.1"/>
    <property type="molecule type" value="Genomic_DNA"/>
</dbReference>
<dbReference type="PIR" id="C64074">
    <property type="entry name" value="C64074"/>
</dbReference>
<dbReference type="RefSeq" id="NP_438682.1">
    <property type="nucleotide sequence ID" value="NC_000907.1"/>
</dbReference>
<dbReference type="SMR" id="P44429"/>
<dbReference type="STRING" id="71421.HI_0524"/>
<dbReference type="EnsemblBacteria" id="AAC22182">
    <property type="protein sequence ID" value="AAC22182"/>
    <property type="gene ID" value="HI_0524"/>
</dbReference>
<dbReference type="KEGG" id="hin:HI_0524"/>
<dbReference type="PATRIC" id="fig|71421.8.peg.543"/>
<dbReference type="eggNOG" id="COG0191">
    <property type="taxonomic scope" value="Bacteria"/>
</dbReference>
<dbReference type="HOGENOM" id="CLU_036923_0_0_6"/>
<dbReference type="OrthoDB" id="9803995at2"/>
<dbReference type="PhylomeDB" id="P44429"/>
<dbReference type="BioCyc" id="HINF71421:G1GJ1-537-MONOMER"/>
<dbReference type="UniPathway" id="UPA00109">
    <property type="reaction ID" value="UER00183"/>
</dbReference>
<dbReference type="Proteomes" id="UP000000579">
    <property type="component" value="Chromosome"/>
</dbReference>
<dbReference type="GO" id="GO:0005829">
    <property type="term" value="C:cytosol"/>
    <property type="evidence" value="ECO:0000318"/>
    <property type="project" value="GO_Central"/>
</dbReference>
<dbReference type="GO" id="GO:0004332">
    <property type="term" value="F:fructose-bisphosphate aldolase activity"/>
    <property type="evidence" value="ECO:0000318"/>
    <property type="project" value="GO_Central"/>
</dbReference>
<dbReference type="GO" id="GO:0008270">
    <property type="term" value="F:zinc ion binding"/>
    <property type="evidence" value="ECO:0000318"/>
    <property type="project" value="GO_Central"/>
</dbReference>
<dbReference type="GO" id="GO:0006094">
    <property type="term" value="P:gluconeogenesis"/>
    <property type="evidence" value="ECO:0000318"/>
    <property type="project" value="GO_Central"/>
</dbReference>
<dbReference type="GO" id="GO:0006096">
    <property type="term" value="P:glycolytic process"/>
    <property type="evidence" value="ECO:0000318"/>
    <property type="project" value="GO_Central"/>
</dbReference>
<dbReference type="CDD" id="cd00946">
    <property type="entry name" value="FBP_aldolase_IIA"/>
    <property type="match status" value="1"/>
</dbReference>
<dbReference type="FunFam" id="3.20.20.70:FF:000013">
    <property type="entry name" value="Class II fructose-bisphosphate aldolase"/>
    <property type="match status" value="1"/>
</dbReference>
<dbReference type="Gene3D" id="3.20.20.70">
    <property type="entry name" value="Aldolase class I"/>
    <property type="match status" value="1"/>
</dbReference>
<dbReference type="InterPro" id="IPR013785">
    <property type="entry name" value="Aldolase_TIM"/>
</dbReference>
<dbReference type="InterPro" id="IPR000771">
    <property type="entry name" value="FBA_II"/>
</dbReference>
<dbReference type="InterPro" id="IPR006411">
    <property type="entry name" value="Fruct_bisP_bact"/>
</dbReference>
<dbReference type="NCBIfam" id="TIGR00167">
    <property type="entry name" value="cbbA"/>
    <property type="match status" value="1"/>
</dbReference>
<dbReference type="NCBIfam" id="TIGR01520">
    <property type="entry name" value="FruBisAldo_II_A"/>
    <property type="match status" value="1"/>
</dbReference>
<dbReference type="NCBIfam" id="NF006628">
    <property type="entry name" value="PRK09197.1"/>
    <property type="match status" value="1"/>
</dbReference>
<dbReference type="PANTHER" id="PTHR30559:SF0">
    <property type="entry name" value="FRUCTOSE-BISPHOSPHATE ALDOLASE"/>
    <property type="match status" value="1"/>
</dbReference>
<dbReference type="PANTHER" id="PTHR30559">
    <property type="entry name" value="FRUCTOSE-BISPHOSPHATE ALDOLASE CLASS 2"/>
    <property type="match status" value="1"/>
</dbReference>
<dbReference type="Pfam" id="PF01116">
    <property type="entry name" value="F_bP_aldolase"/>
    <property type="match status" value="1"/>
</dbReference>
<dbReference type="PIRSF" id="PIRSF001359">
    <property type="entry name" value="F_bP_aldolase_II"/>
    <property type="match status" value="1"/>
</dbReference>
<dbReference type="SUPFAM" id="SSF51569">
    <property type="entry name" value="Aldolase"/>
    <property type="match status" value="1"/>
</dbReference>
<dbReference type="PROSITE" id="PS00602">
    <property type="entry name" value="ALDOLASE_CLASS_II_1"/>
    <property type="match status" value="1"/>
</dbReference>
<dbReference type="PROSITE" id="PS00806">
    <property type="entry name" value="ALDOLASE_CLASS_II_2"/>
    <property type="match status" value="1"/>
</dbReference>
<protein>
    <recommendedName>
        <fullName>Fructose-bisphosphate aldolase</fullName>
        <shortName>FBP aldolase</shortName>
        <shortName>FBPA</shortName>
        <ecNumber>4.1.2.13</ecNumber>
    </recommendedName>
    <alternativeName>
        <fullName>Fructose-1,6-bisphosphate aldolase</fullName>
    </alternativeName>
</protein>
<comment type="function">
    <text evidence="1">Catalyzes the aldol condensation of dihydroxyacetone phosphate (DHAP or glycerone-phosphate) with glyceraldehyde 3-phosphate (G3P) to form fructose 1,6-bisphosphate (FBP) in gluconeogenesis and the reverse reaction in glycolysis.</text>
</comment>
<comment type="catalytic activity">
    <reaction>
        <text>beta-D-fructose 1,6-bisphosphate = D-glyceraldehyde 3-phosphate + dihydroxyacetone phosphate</text>
        <dbReference type="Rhea" id="RHEA:14729"/>
        <dbReference type="ChEBI" id="CHEBI:32966"/>
        <dbReference type="ChEBI" id="CHEBI:57642"/>
        <dbReference type="ChEBI" id="CHEBI:59776"/>
        <dbReference type="EC" id="4.1.2.13"/>
    </reaction>
</comment>
<comment type="cofactor">
    <cofactor evidence="1">
        <name>Zn(2+)</name>
        <dbReference type="ChEBI" id="CHEBI:29105"/>
    </cofactor>
    <text evidence="1">Binds 2 Zn(2+) ions per subunit. One is catalytic and the other provides a structural contribution.</text>
</comment>
<comment type="pathway">
    <text>Carbohydrate degradation; glycolysis; D-glyceraldehyde 3-phosphate and glycerone phosphate from D-glucose: step 4/4.</text>
</comment>
<comment type="subunit">
    <text evidence="1">Homodimer.</text>
</comment>
<comment type="similarity">
    <text evidence="2">Belongs to the class II fructose-bisphosphate aldolase family.</text>
</comment>
<feature type="chain" id="PRO_0000178716" description="Fructose-bisphosphate aldolase">
    <location>
        <begin position="1"/>
        <end position="359"/>
    </location>
</feature>
<feature type="active site" description="Proton donor" evidence="1">
    <location>
        <position position="110"/>
    </location>
</feature>
<feature type="binding site" evidence="1">
    <location>
        <position position="62"/>
    </location>
    <ligand>
        <name>D-glyceraldehyde 3-phosphate</name>
        <dbReference type="ChEBI" id="CHEBI:59776"/>
    </ligand>
</feature>
<feature type="binding site" evidence="1">
    <location>
        <position position="111"/>
    </location>
    <ligand>
        <name>Zn(2+)</name>
        <dbReference type="ChEBI" id="CHEBI:29105"/>
        <label>1</label>
        <note>catalytic</note>
    </ligand>
</feature>
<feature type="binding site" evidence="1">
    <location>
        <position position="145"/>
    </location>
    <ligand>
        <name>Zn(2+)</name>
        <dbReference type="ChEBI" id="CHEBI:29105"/>
        <label>2</label>
    </ligand>
</feature>
<feature type="binding site" evidence="1">
    <location>
        <position position="175"/>
    </location>
    <ligand>
        <name>Zn(2+)</name>
        <dbReference type="ChEBI" id="CHEBI:29105"/>
        <label>2</label>
    </ligand>
</feature>
<feature type="binding site" evidence="1">
    <location>
        <position position="227"/>
    </location>
    <ligand>
        <name>Zn(2+)</name>
        <dbReference type="ChEBI" id="CHEBI:29105"/>
        <label>1</label>
        <note>catalytic</note>
    </ligand>
</feature>
<feature type="binding site" evidence="1">
    <location>
        <position position="228"/>
    </location>
    <ligand>
        <name>dihydroxyacetone phosphate</name>
        <dbReference type="ChEBI" id="CHEBI:57642"/>
    </ligand>
</feature>
<feature type="binding site" evidence="1">
    <location>
        <position position="265"/>
    </location>
    <ligand>
        <name>Zn(2+)</name>
        <dbReference type="ChEBI" id="CHEBI:29105"/>
        <label>1</label>
        <note>catalytic</note>
    </ligand>
</feature>
<feature type="binding site" evidence="1">
    <location>
        <begin position="266"/>
        <end position="268"/>
    </location>
    <ligand>
        <name>dihydroxyacetone phosphate</name>
        <dbReference type="ChEBI" id="CHEBI:57642"/>
    </ligand>
</feature>
<feature type="binding site" evidence="1">
    <location>
        <begin position="287"/>
        <end position="290"/>
    </location>
    <ligand>
        <name>dihydroxyacetone phosphate</name>
        <dbReference type="ChEBI" id="CHEBI:57642"/>
    </ligand>
</feature>